<protein>
    <recommendedName>
        <fullName evidence="1">Vacuolar membrane protease</fullName>
        <ecNumber evidence="6">3.4.-.-</ecNumber>
    </recommendedName>
    <alternativeName>
        <fullName evidence="1">FXNA-related family protease 1</fullName>
    </alternativeName>
</protein>
<feature type="chain" id="PRO_0000411712" description="Vacuolar membrane protease">
    <location>
        <begin position="1"/>
        <end position="1012"/>
    </location>
</feature>
<feature type="topological domain" description="Cytoplasmic" evidence="1">
    <location>
        <begin position="1"/>
        <end position="60"/>
    </location>
</feature>
<feature type="transmembrane region" description="Helical; Name=1" evidence="3">
    <location>
        <begin position="61"/>
        <end position="81"/>
    </location>
</feature>
<feature type="topological domain" description="Vacuolar" evidence="1">
    <location>
        <begin position="82"/>
        <end position="432"/>
    </location>
</feature>
<feature type="transmembrane region" description="Helical; Name=2" evidence="3">
    <location>
        <begin position="433"/>
        <end position="453"/>
    </location>
</feature>
<feature type="topological domain" description="Cytoplasmic" evidence="1">
    <location>
        <begin position="454"/>
        <end position="487"/>
    </location>
</feature>
<feature type="transmembrane region" description="Helical; Name=3" evidence="3">
    <location>
        <begin position="488"/>
        <end position="508"/>
    </location>
</feature>
<feature type="topological domain" description="Vacuolar" evidence="1">
    <location>
        <begin position="509"/>
        <end position="518"/>
    </location>
</feature>
<feature type="transmembrane region" description="Helical; Name=4" evidence="3">
    <location>
        <begin position="519"/>
        <end position="539"/>
    </location>
</feature>
<feature type="topological domain" description="Cytoplasmic" evidence="1">
    <location>
        <begin position="540"/>
        <end position="550"/>
    </location>
</feature>
<feature type="transmembrane region" description="Helical; Name=5" evidence="3">
    <location>
        <begin position="551"/>
        <end position="571"/>
    </location>
</feature>
<feature type="topological domain" description="Vacuolar" evidence="1">
    <location>
        <begin position="572"/>
        <end position="575"/>
    </location>
</feature>
<feature type="transmembrane region" description="Helical; Name=6" evidence="3">
    <location>
        <begin position="576"/>
        <end position="596"/>
    </location>
</feature>
<feature type="topological domain" description="Cytoplasmic" evidence="1">
    <location>
        <begin position="597"/>
        <end position="710"/>
    </location>
</feature>
<feature type="transmembrane region" description="Helical; Name=7" evidence="3">
    <location>
        <begin position="711"/>
        <end position="731"/>
    </location>
</feature>
<feature type="topological domain" description="Vacuolar" evidence="1">
    <location>
        <begin position="732"/>
        <end position="743"/>
    </location>
</feature>
<feature type="transmembrane region" description="Helical; Name=8" evidence="3">
    <location>
        <begin position="744"/>
        <end position="764"/>
    </location>
</feature>
<feature type="topological domain" description="Cytoplasmic" evidence="1">
    <location>
        <begin position="765"/>
        <end position="777"/>
    </location>
</feature>
<feature type="transmembrane region" description="Helical; Name=9" evidence="3">
    <location>
        <begin position="778"/>
        <end position="798"/>
    </location>
</feature>
<feature type="topological domain" description="Vacuolar" evidence="1">
    <location>
        <begin position="799"/>
        <end position="1012"/>
    </location>
</feature>
<feature type="region of interest" description="Disordered" evidence="5">
    <location>
        <begin position="614"/>
        <end position="660"/>
    </location>
</feature>
<feature type="compositionally biased region" description="Polar residues" evidence="5">
    <location>
        <begin position="614"/>
        <end position="629"/>
    </location>
</feature>
<feature type="active site" description="Proton acceptor" evidence="2">
    <location>
        <position position="261"/>
    </location>
</feature>
<feature type="binding site" evidence="2">
    <location>
        <position position="215"/>
    </location>
    <ligand>
        <name>Zn(2+)</name>
        <dbReference type="ChEBI" id="CHEBI:29105"/>
        <label>1</label>
        <note>catalytic</note>
    </ligand>
</feature>
<feature type="binding site" evidence="2">
    <location>
        <position position="227"/>
    </location>
    <ligand>
        <name>Zn(2+)</name>
        <dbReference type="ChEBI" id="CHEBI:29105"/>
        <label>1</label>
        <note>catalytic</note>
    </ligand>
</feature>
<feature type="binding site" evidence="2">
    <location>
        <position position="227"/>
    </location>
    <ligand>
        <name>Zn(2+)</name>
        <dbReference type="ChEBI" id="CHEBI:29105"/>
        <label>2</label>
        <note>catalytic</note>
    </ligand>
</feature>
<feature type="binding site" evidence="2">
    <location>
        <position position="262"/>
    </location>
    <ligand>
        <name>Zn(2+)</name>
        <dbReference type="ChEBI" id="CHEBI:29105"/>
        <label>2</label>
        <note>catalytic</note>
    </ligand>
</feature>
<feature type="binding site" evidence="2">
    <location>
        <position position="287"/>
    </location>
    <ligand>
        <name>Zn(2+)</name>
        <dbReference type="ChEBI" id="CHEBI:29105"/>
        <label>1</label>
        <note>catalytic</note>
    </ligand>
</feature>
<feature type="binding site" evidence="2">
    <location>
        <position position="360"/>
    </location>
    <ligand>
        <name>Zn(2+)</name>
        <dbReference type="ChEBI" id="CHEBI:29105"/>
        <label>2</label>
        <note>catalytic</note>
    </ligand>
</feature>
<feature type="site" description="Transition state stabilizer" evidence="2">
    <location>
        <position position="359"/>
    </location>
</feature>
<feature type="glycosylation site" description="N-linked (GlcNAc...) asparagine" evidence="4">
    <location>
        <position position="159"/>
    </location>
</feature>
<feature type="glycosylation site" description="N-linked (GlcNAc...) asparagine" evidence="4">
    <location>
        <position position="842"/>
    </location>
</feature>
<feature type="glycosylation site" description="N-linked (GlcNAc...) asparagine" evidence="4">
    <location>
        <position position="878"/>
    </location>
</feature>
<proteinExistence type="inferred from homology"/>
<sequence length="1012" mass="112348">MRRSTDPRNLLVRRGPLLVDGESAISELDPGFFPTGDAPKMSSTTRRRFNLIAFTPGPVTVISSLVYLALLIPLLLVHTIVPSAPKSNPKGVDLSEAWNDLQHLTSGFHPYNSHRNDEIHQWLLQRVGHILDASRKAHEDDAMGSVAPDVFVFDDQQSNLTFSGGGVGNKPITGVYFEGKNIIVYIRGLEDDKENWWDSPGGKPKGKGGVLVNAHYDSVSTGFGATDDGVGVVSVLQLIKFFTSPGNLPRKGLVLLLNNGEEDYLNGARAYSQHPLSKYTHTFLNLEGAGAGGRAALFRTTDIEVTRFYKSSPHPFGSVLAADGFKMGLIRSETDYAVFKGVLGLRGLDVAFIEPRARYHTDQDDVRHTSIDSVWHMLSAAIATTKGLVSYTGSEFDGRAPGKGMVNSGVGTHGVWFDLFGSSFAVFRLHTLFAISVTLLVVCPIVLFVIGIILSKMDKMYLFSIHETIPETKEKVSVRGLRGLFRYPIILVVSSGILIGLSYLLAKVNPFIVHSSSYAVWSMMLSSWIFMTWFLSCIADFFRPSALHRAYTFTWQLLVMWVLLVISTVYVNQHDIAAGYFIVFYFAGTFLATLISYLELFALPNKTRYAREQSQYPSRLGSNRSSRILSPSADELPTGGDNNGEIYDGEEEPTESSSLLGRQRRTTFANYTRTGRDLASSESGTYEDHSETGVFGEEQKWSASLPTWTWVLQFLFVGPVVIMFIGQLGLFLTSAMNQVGADGVGLLVVYIAIAVFSVLLLIPLSPFIHRFTYHVPTFLLLVFIATLIYNLAAFPFSAENRLKIFFVQELNLDTGRNQVSLTGVDPYVQDIIRAIPSASKENISCDSELDSGRRKCSWPGLAPEVVQDEPTDRWLSFNISKPSSQETKDTPVLHARLHVSGKNTRACRVNFERPIRDYSLPGSALDDRMPHTLPQGISEIRLWSRTWENVWTVDVQWDAEDMDELHGRVVCLWSDANQLGSIPALDELRLFAPPWVAISKLKDGLVEVSRGF</sequence>
<reference key="1">
    <citation type="journal article" date="2009" name="Genome Res.">
        <title>Comparative genomic analyses of the human fungal pathogens Coccidioides and their relatives.</title>
        <authorList>
            <person name="Sharpton T.J."/>
            <person name="Stajich J.E."/>
            <person name="Rounsley S.D."/>
            <person name="Gardner M.J."/>
            <person name="Wortman J.R."/>
            <person name="Jordar V.S."/>
            <person name="Maiti R."/>
            <person name="Kodira C.D."/>
            <person name="Neafsey D.E."/>
            <person name="Zeng Q."/>
            <person name="Hung C.-Y."/>
            <person name="McMahan C."/>
            <person name="Muszewska A."/>
            <person name="Grynberg M."/>
            <person name="Mandel M.A."/>
            <person name="Kellner E.M."/>
            <person name="Barker B.M."/>
            <person name="Galgiani J.N."/>
            <person name="Orbach M.J."/>
            <person name="Kirkland T.N."/>
            <person name="Cole G.T."/>
            <person name="Henn M.R."/>
            <person name="Birren B.W."/>
            <person name="Taylor J.W."/>
        </authorList>
    </citation>
    <scope>NUCLEOTIDE SEQUENCE [LARGE SCALE GENOMIC DNA]</scope>
    <source>
        <strain>C735</strain>
    </source>
</reference>
<organism>
    <name type="scientific">Coccidioides posadasii (strain C735)</name>
    <name type="common">Valley fever fungus</name>
    <dbReference type="NCBI Taxonomy" id="222929"/>
    <lineage>
        <taxon>Eukaryota</taxon>
        <taxon>Fungi</taxon>
        <taxon>Dikarya</taxon>
        <taxon>Ascomycota</taxon>
        <taxon>Pezizomycotina</taxon>
        <taxon>Eurotiomycetes</taxon>
        <taxon>Eurotiomycetidae</taxon>
        <taxon>Onygenales</taxon>
        <taxon>Onygenaceae</taxon>
        <taxon>Coccidioides</taxon>
    </lineage>
</organism>
<dbReference type="EC" id="3.4.-.-" evidence="6"/>
<dbReference type="EMBL" id="ACFW01000030">
    <property type="protein sequence ID" value="EER26310.1"/>
    <property type="molecule type" value="Genomic_DNA"/>
</dbReference>
<dbReference type="RefSeq" id="XP_003068455.1">
    <property type="nucleotide sequence ID" value="XM_003068409.1"/>
</dbReference>
<dbReference type="SMR" id="C5P998"/>
<dbReference type="KEGG" id="cpw:9693938"/>
<dbReference type="VEuPathDB" id="FungiDB:CPC735_004820"/>
<dbReference type="HOGENOM" id="CLU_006412_1_0_1"/>
<dbReference type="OrthoDB" id="10257471at2759"/>
<dbReference type="Proteomes" id="UP000009084">
    <property type="component" value="Unassembled WGS sequence"/>
</dbReference>
<dbReference type="GO" id="GO:0005774">
    <property type="term" value="C:vacuolar membrane"/>
    <property type="evidence" value="ECO:0007669"/>
    <property type="project" value="UniProtKB-SubCell"/>
</dbReference>
<dbReference type="GO" id="GO:0046872">
    <property type="term" value="F:metal ion binding"/>
    <property type="evidence" value="ECO:0007669"/>
    <property type="project" value="UniProtKB-KW"/>
</dbReference>
<dbReference type="GO" id="GO:0008235">
    <property type="term" value="F:metalloexopeptidase activity"/>
    <property type="evidence" value="ECO:0007669"/>
    <property type="project" value="InterPro"/>
</dbReference>
<dbReference type="GO" id="GO:0006508">
    <property type="term" value="P:proteolysis"/>
    <property type="evidence" value="ECO:0007669"/>
    <property type="project" value="UniProtKB-KW"/>
</dbReference>
<dbReference type="CDD" id="cd03875">
    <property type="entry name" value="M28_Fxna_like"/>
    <property type="match status" value="1"/>
</dbReference>
<dbReference type="FunFam" id="3.40.630.10:FF:000057">
    <property type="entry name" value="Vacuolar membrane protease"/>
    <property type="match status" value="1"/>
</dbReference>
<dbReference type="Gene3D" id="3.40.630.10">
    <property type="entry name" value="Zn peptidases"/>
    <property type="match status" value="1"/>
</dbReference>
<dbReference type="InterPro" id="IPR048024">
    <property type="entry name" value="Fxna-like_M28_dom"/>
</dbReference>
<dbReference type="InterPro" id="IPR045175">
    <property type="entry name" value="M28_fam"/>
</dbReference>
<dbReference type="InterPro" id="IPR007484">
    <property type="entry name" value="Peptidase_M28"/>
</dbReference>
<dbReference type="InterPro" id="IPR053975">
    <property type="entry name" value="PFF1_C"/>
</dbReference>
<dbReference type="InterPro" id="IPR053976">
    <property type="entry name" value="PFF1_TM"/>
</dbReference>
<dbReference type="PANTHER" id="PTHR12147">
    <property type="entry name" value="METALLOPEPTIDASE M28 FAMILY MEMBER"/>
    <property type="match status" value="1"/>
</dbReference>
<dbReference type="PANTHER" id="PTHR12147:SF58">
    <property type="entry name" value="VACUOLAR MEMBRANE PROTEASE"/>
    <property type="match status" value="1"/>
</dbReference>
<dbReference type="Pfam" id="PF04389">
    <property type="entry name" value="Peptidase_M28"/>
    <property type="match status" value="1"/>
</dbReference>
<dbReference type="Pfam" id="PF22250">
    <property type="entry name" value="PFF1_C"/>
    <property type="match status" value="1"/>
</dbReference>
<dbReference type="Pfam" id="PF22251">
    <property type="entry name" value="PFF1_TM"/>
    <property type="match status" value="1"/>
</dbReference>
<dbReference type="SUPFAM" id="SSF53187">
    <property type="entry name" value="Zn-dependent exopeptidases"/>
    <property type="match status" value="1"/>
</dbReference>
<gene>
    <name type="ORF">CPC735_004820</name>
</gene>
<comment type="function">
    <text evidence="1">May be involved in vacuolar sorting and osmoregulation.</text>
</comment>
<comment type="cofactor">
    <cofactor evidence="2">
        <name>Zn(2+)</name>
        <dbReference type="ChEBI" id="CHEBI:29105"/>
    </cofactor>
    <text evidence="2">Binds 2 Zn(2+) ions per subunit.</text>
</comment>
<comment type="subcellular location">
    <subcellularLocation>
        <location evidence="1">Vacuole membrane</location>
        <topology evidence="3">Multi-pass membrane protein</topology>
    </subcellularLocation>
</comment>
<comment type="similarity">
    <text evidence="6">Belongs to the peptidase M28 family.</text>
</comment>
<keyword id="KW-0325">Glycoprotein</keyword>
<keyword id="KW-0378">Hydrolase</keyword>
<keyword id="KW-0472">Membrane</keyword>
<keyword id="KW-0479">Metal-binding</keyword>
<keyword id="KW-0482">Metalloprotease</keyword>
<keyword id="KW-0645">Protease</keyword>
<keyword id="KW-0812">Transmembrane</keyword>
<keyword id="KW-1133">Transmembrane helix</keyword>
<keyword id="KW-0926">Vacuole</keyword>
<keyword id="KW-0862">Zinc</keyword>
<evidence type="ECO:0000250" key="1">
    <source>
        <dbReference type="UniProtKB" id="P38244"/>
    </source>
</evidence>
<evidence type="ECO:0000250" key="2">
    <source>
        <dbReference type="UniProtKB" id="P80561"/>
    </source>
</evidence>
<evidence type="ECO:0000255" key="3"/>
<evidence type="ECO:0000255" key="4">
    <source>
        <dbReference type="PROSITE-ProRule" id="PRU00498"/>
    </source>
</evidence>
<evidence type="ECO:0000256" key="5">
    <source>
        <dbReference type="SAM" id="MobiDB-lite"/>
    </source>
</evidence>
<evidence type="ECO:0000305" key="6"/>
<name>PFF1_COCP7</name>
<accession>C5P998</accession>